<evidence type="ECO:0000255" key="1">
    <source>
        <dbReference type="HAMAP-Rule" id="MF_00171"/>
    </source>
</evidence>
<organism>
    <name type="scientific">Thermodesulfovibrio yellowstonii (strain ATCC 51303 / DSM 11347 / YP87)</name>
    <dbReference type="NCBI Taxonomy" id="289376"/>
    <lineage>
        <taxon>Bacteria</taxon>
        <taxon>Pseudomonadati</taxon>
        <taxon>Nitrospirota</taxon>
        <taxon>Thermodesulfovibrionia</taxon>
        <taxon>Thermodesulfovibrionales</taxon>
        <taxon>Thermodesulfovibrionaceae</taxon>
        <taxon>Thermodesulfovibrio</taxon>
    </lineage>
</organism>
<accession>B5YGE4</accession>
<protein>
    <recommendedName>
        <fullName evidence="1">tRNA pseudouridine synthase A</fullName>
        <ecNumber evidence="1">5.4.99.12</ecNumber>
    </recommendedName>
    <alternativeName>
        <fullName evidence="1">tRNA pseudouridine(38-40) synthase</fullName>
    </alternativeName>
    <alternativeName>
        <fullName evidence="1">tRNA pseudouridylate synthase I</fullName>
    </alternativeName>
    <alternativeName>
        <fullName evidence="1">tRNA-uridine isomerase I</fullName>
    </alternativeName>
</protein>
<reference key="1">
    <citation type="submission" date="2008-08" db="EMBL/GenBank/DDBJ databases">
        <title>The complete genome sequence of Thermodesulfovibrio yellowstonii strain ATCC 51303 / DSM 11347 / YP87.</title>
        <authorList>
            <person name="Dodson R.J."/>
            <person name="Durkin A.S."/>
            <person name="Wu M."/>
            <person name="Eisen J."/>
            <person name="Sutton G."/>
        </authorList>
    </citation>
    <scope>NUCLEOTIDE SEQUENCE [LARGE SCALE GENOMIC DNA]</scope>
    <source>
        <strain>ATCC 51303 / DSM 11347 / YP87</strain>
    </source>
</reference>
<name>TRUA_THEYD</name>
<feature type="chain" id="PRO_1000097801" description="tRNA pseudouridine synthase A">
    <location>
        <begin position="1"/>
        <end position="254"/>
    </location>
</feature>
<feature type="active site" description="Nucleophile" evidence="1">
    <location>
        <position position="52"/>
    </location>
</feature>
<feature type="binding site" evidence="1">
    <location>
        <position position="110"/>
    </location>
    <ligand>
        <name>substrate</name>
    </ligand>
</feature>
<dbReference type="EC" id="5.4.99.12" evidence="1"/>
<dbReference type="EMBL" id="CP001147">
    <property type="protein sequence ID" value="ACI20173.1"/>
    <property type="molecule type" value="Genomic_DNA"/>
</dbReference>
<dbReference type="RefSeq" id="WP_012544911.1">
    <property type="nucleotide sequence ID" value="NC_011296.1"/>
</dbReference>
<dbReference type="RefSeq" id="YP_002249342.1">
    <property type="nucleotide sequence ID" value="NC_011296.1"/>
</dbReference>
<dbReference type="SMR" id="B5YGE4"/>
<dbReference type="FunCoup" id="B5YGE4">
    <property type="interactions" value="393"/>
</dbReference>
<dbReference type="STRING" id="289376.THEYE_A1546"/>
<dbReference type="EnsemblBacteria" id="ACI20173">
    <property type="protein sequence ID" value="ACI20173"/>
    <property type="gene ID" value="THEYE_A1546"/>
</dbReference>
<dbReference type="KEGG" id="tye:THEYE_A1546"/>
<dbReference type="PATRIC" id="fig|289376.4.peg.1504"/>
<dbReference type="eggNOG" id="COG0101">
    <property type="taxonomic scope" value="Bacteria"/>
</dbReference>
<dbReference type="HOGENOM" id="CLU_014673_0_1_0"/>
<dbReference type="InParanoid" id="B5YGE4"/>
<dbReference type="OrthoDB" id="9811823at2"/>
<dbReference type="Proteomes" id="UP000000718">
    <property type="component" value="Chromosome"/>
</dbReference>
<dbReference type="GO" id="GO:0009982">
    <property type="term" value="F:pseudouridine synthase activity"/>
    <property type="evidence" value="ECO:0000318"/>
    <property type="project" value="GO_Central"/>
</dbReference>
<dbReference type="GO" id="GO:0003723">
    <property type="term" value="F:RNA binding"/>
    <property type="evidence" value="ECO:0007669"/>
    <property type="project" value="InterPro"/>
</dbReference>
<dbReference type="GO" id="GO:0160147">
    <property type="term" value="F:tRNA pseudouridine(38-40) synthase activity"/>
    <property type="evidence" value="ECO:0007669"/>
    <property type="project" value="UniProtKB-EC"/>
</dbReference>
<dbReference type="GO" id="GO:0031119">
    <property type="term" value="P:tRNA pseudouridine synthesis"/>
    <property type="evidence" value="ECO:0000318"/>
    <property type="project" value="GO_Central"/>
</dbReference>
<dbReference type="CDD" id="cd02570">
    <property type="entry name" value="PseudoU_synth_EcTruA"/>
    <property type="match status" value="1"/>
</dbReference>
<dbReference type="FunFam" id="3.30.70.580:FF:000001">
    <property type="entry name" value="tRNA pseudouridine synthase A"/>
    <property type="match status" value="1"/>
</dbReference>
<dbReference type="Gene3D" id="3.30.70.660">
    <property type="entry name" value="Pseudouridine synthase I, catalytic domain, C-terminal subdomain"/>
    <property type="match status" value="1"/>
</dbReference>
<dbReference type="Gene3D" id="3.30.70.580">
    <property type="entry name" value="Pseudouridine synthase I, catalytic domain, N-terminal subdomain"/>
    <property type="match status" value="1"/>
</dbReference>
<dbReference type="HAMAP" id="MF_00171">
    <property type="entry name" value="TruA"/>
    <property type="match status" value="1"/>
</dbReference>
<dbReference type="InterPro" id="IPR020103">
    <property type="entry name" value="PsdUridine_synth_cat_dom_sf"/>
</dbReference>
<dbReference type="InterPro" id="IPR001406">
    <property type="entry name" value="PsdUridine_synth_TruA"/>
</dbReference>
<dbReference type="InterPro" id="IPR020097">
    <property type="entry name" value="PsdUridine_synth_TruA_a/b_dom"/>
</dbReference>
<dbReference type="InterPro" id="IPR020095">
    <property type="entry name" value="PsdUridine_synth_TruA_C"/>
</dbReference>
<dbReference type="InterPro" id="IPR020094">
    <property type="entry name" value="TruA/RsuA/RluB/E/F_N"/>
</dbReference>
<dbReference type="NCBIfam" id="TIGR00071">
    <property type="entry name" value="hisT_truA"/>
    <property type="match status" value="1"/>
</dbReference>
<dbReference type="PANTHER" id="PTHR11142">
    <property type="entry name" value="PSEUDOURIDYLATE SYNTHASE"/>
    <property type="match status" value="1"/>
</dbReference>
<dbReference type="PANTHER" id="PTHR11142:SF0">
    <property type="entry name" value="TRNA PSEUDOURIDINE SYNTHASE-LIKE 1"/>
    <property type="match status" value="1"/>
</dbReference>
<dbReference type="Pfam" id="PF01416">
    <property type="entry name" value="PseudoU_synth_1"/>
    <property type="match status" value="2"/>
</dbReference>
<dbReference type="PIRSF" id="PIRSF001430">
    <property type="entry name" value="tRNA_psdUrid_synth"/>
    <property type="match status" value="1"/>
</dbReference>
<dbReference type="SUPFAM" id="SSF55120">
    <property type="entry name" value="Pseudouridine synthase"/>
    <property type="match status" value="1"/>
</dbReference>
<proteinExistence type="inferred from homology"/>
<keyword id="KW-0413">Isomerase</keyword>
<keyword id="KW-1185">Reference proteome</keyword>
<keyword id="KW-0819">tRNA processing</keyword>
<comment type="function">
    <text evidence="1">Formation of pseudouridine at positions 38, 39 and 40 in the anticodon stem and loop of transfer RNAs.</text>
</comment>
<comment type="catalytic activity">
    <reaction evidence="1">
        <text>uridine(38/39/40) in tRNA = pseudouridine(38/39/40) in tRNA</text>
        <dbReference type="Rhea" id="RHEA:22376"/>
        <dbReference type="Rhea" id="RHEA-COMP:10085"/>
        <dbReference type="Rhea" id="RHEA-COMP:10087"/>
        <dbReference type="ChEBI" id="CHEBI:65314"/>
        <dbReference type="ChEBI" id="CHEBI:65315"/>
        <dbReference type="EC" id="5.4.99.12"/>
    </reaction>
</comment>
<comment type="subunit">
    <text evidence="1">Homodimer.</text>
</comment>
<comment type="similarity">
    <text evidence="1">Belongs to the tRNA pseudouridine synthase TruA family.</text>
</comment>
<gene>
    <name evidence="1" type="primary">truA</name>
    <name type="ordered locus">THEYE_A1546</name>
</gene>
<sequence>MVNIKMTIQYDGTNYFGWQRQRKGRTIQATIEECLRKIFQREIKIRGAGRTDAGVHALGQVATFKAELKMSLDILKKVLNSLLPNDIKIIKLENVEDSFHPQHSVKRKSYIYYLCFDEECSCFIQRYVWHYPWKLDLSLMEEALSLFTGTKDFTAFSGSTDVKNKIRTVHDFTMQLLTKLCFMDMCLNGNFIKFRIEADGFLRYMVRNLVGCIIEIGKGKLRIESIQEAFESGKRPSTMQTAPSNGLFLEKVIY</sequence>